<reference key="1">
    <citation type="journal article" date="2008" name="Genome Biol.">
        <title>Encapsulated in silica: genome, proteome and physiology of the thermophilic bacterium Anoxybacillus flavithermus WK1.</title>
        <authorList>
            <person name="Saw J.H."/>
            <person name="Mountain B.W."/>
            <person name="Feng L."/>
            <person name="Omelchenko M.V."/>
            <person name="Hou S."/>
            <person name="Saito J.A."/>
            <person name="Stott M.B."/>
            <person name="Li D."/>
            <person name="Zhao G."/>
            <person name="Wu J."/>
            <person name="Galperin M.Y."/>
            <person name="Koonin E.V."/>
            <person name="Makarova K.S."/>
            <person name="Wolf Y.I."/>
            <person name="Rigden D.J."/>
            <person name="Dunfield P.F."/>
            <person name="Wang L."/>
            <person name="Alam M."/>
        </authorList>
    </citation>
    <scope>NUCLEOTIDE SEQUENCE [LARGE SCALE GENOMIC DNA]</scope>
    <source>
        <strain>DSM 21510 / WK1</strain>
    </source>
</reference>
<accession>B7GJ80</accession>
<comment type="function">
    <text evidence="1">Binds 16S rRNA, required for the assembly of 30S particles and may also be responsible for determining the conformation of the 16S rRNA at the A site.</text>
</comment>
<comment type="cofactor">
    <cofactor evidence="1">
        <name>Zn(2+)</name>
        <dbReference type="ChEBI" id="CHEBI:29105"/>
    </cofactor>
    <text evidence="1">Binds 1 zinc ion per subunit.</text>
</comment>
<comment type="subunit">
    <text evidence="1">Part of the 30S ribosomal subunit. Contacts proteins S3 and S10.</text>
</comment>
<comment type="similarity">
    <text evidence="1">Belongs to the universal ribosomal protein uS14 family. Zinc-binding uS14 subfamily.</text>
</comment>
<proteinExistence type="inferred from homology"/>
<dbReference type="EMBL" id="CP000922">
    <property type="protein sequence ID" value="ACJ32502.1"/>
    <property type="molecule type" value="Genomic_DNA"/>
</dbReference>
<dbReference type="RefSeq" id="WP_003397678.1">
    <property type="nucleotide sequence ID" value="NC_011567.1"/>
</dbReference>
<dbReference type="SMR" id="B7GJ80"/>
<dbReference type="STRING" id="491915.Aflv_0118"/>
<dbReference type="GeneID" id="7036317"/>
<dbReference type="KEGG" id="afl:Aflv_0118"/>
<dbReference type="eggNOG" id="COG0199">
    <property type="taxonomic scope" value="Bacteria"/>
</dbReference>
<dbReference type="HOGENOM" id="CLU_139869_3_0_9"/>
<dbReference type="Proteomes" id="UP000000742">
    <property type="component" value="Chromosome"/>
</dbReference>
<dbReference type="GO" id="GO:0015935">
    <property type="term" value="C:small ribosomal subunit"/>
    <property type="evidence" value="ECO:0007669"/>
    <property type="project" value="TreeGrafter"/>
</dbReference>
<dbReference type="GO" id="GO:0019843">
    <property type="term" value="F:rRNA binding"/>
    <property type="evidence" value="ECO:0007669"/>
    <property type="project" value="UniProtKB-UniRule"/>
</dbReference>
<dbReference type="GO" id="GO:0003735">
    <property type="term" value="F:structural constituent of ribosome"/>
    <property type="evidence" value="ECO:0007669"/>
    <property type="project" value="InterPro"/>
</dbReference>
<dbReference type="GO" id="GO:0008270">
    <property type="term" value="F:zinc ion binding"/>
    <property type="evidence" value="ECO:0007669"/>
    <property type="project" value="UniProtKB-UniRule"/>
</dbReference>
<dbReference type="GO" id="GO:0006412">
    <property type="term" value="P:translation"/>
    <property type="evidence" value="ECO:0007669"/>
    <property type="project" value="UniProtKB-UniRule"/>
</dbReference>
<dbReference type="FunFam" id="4.10.830.10:FF:000001">
    <property type="entry name" value="30S ribosomal protein S14 type Z"/>
    <property type="match status" value="1"/>
</dbReference>
<dbReference type="Gene3D" id="4.10.830.10">
    <property type="entry name" value="30s Ribosomal Protein S14, Chain N"/>
    <property type="match status" value="1"/>
</dbReference>
<dbReference type="HAMAP" id="MF_01364_B">
    <property type="entry name" value="Ribosomal_uS14_2_B"/>
    <property type="match status" value="1"/>
</dbReference>
<dbReference type="InterPro" id="IPR001209">
    <property type="entry name" value="Ribosomal_uS14"/>
</dbReference>
<dbReference type="InterPro" id="IPR023053">
    <property type="entry name" value="Ribosomal_uS14_bact"/>
</dbReference>
<dbReference type="InterPro" id="IPR018271">
    <property type="entry name" value="Ribosomal_uS14_CS"/>
</dbReference>
<dbReference type="InterPro" id="IPR043140">
    <property type="entry name" value="Ribosomal_uS14_sf"/>
</dbReference>
<dbReference type="NCBIfam" id="NF005974">
    <property type="entry name" value="PRK08061.1"/>
    <property type="match status" value="1"/>
</dbReference>
<dbReference type="PANTHER" id="PTHR19836">
    <property type="entry name" value="30S RIBOSOMAL PROTEIN S14"/>
    <property type="match status" value="1"/>
</dbReference>
<dbReference type="PANTHER" id="PTHR19836:SF26">
    <property type="entry name" value="SMALL RIBOSOMAL SUBUNIT PROTEIN US14B"/>
    <property type="match status" value="1"/>
</dbReference>
<dbReference type="Pfam" id="PF00253">
    <property type="entry name" value="Ribosomal_S14"/>
    <property type="match status" value="1"/>
</dbReference>
<dbReference type="SUPFAM" id="SSF57716">
    <property type="entry name" value="Glucocorticoid receptor-like (DNA-binding domain)"/>
    <property type="match status" value="1"/>
</dbReference>
<dbReference type="PROSITE" id="PS00527">
    <property type="entry name" value="RIBOSOMAL_S14"/>
    <property type="match status" value="1"/>
</dbReference>
<name>RS14Z_ANOFW</name>
<feature type="chain" id="PRO_1000143879" description="Small ribosomal subunit protein uS14">
    <location>
        <begin position="1"/>
        <end position="61"/>
    </location>
</feature>
<feature type="binding site" evidence="1">
    <location>
        <position position="24"/>
    </location>
    <ligand>
        <name>Zn(2+)</name>
        <dbReference type="ChEBI" id="CHEBI:29105"/>
    </ligand>
</feature>
<feature type="binding site" evidence="1">
    <location>
        <position position="27"/>
    </location>
    <ligand>
        <name>Zn(2+)</name>
        <dbReference type="ChEBI" id="CHEBI:29105"/>
    </ligand>
</feature>
<feature type="binding site" evidence="1">
    <location>
        <position position="40"/>
    </location>
    <ligand>
        <name>Zn(2+)</name>
        <dbReference type="ChEBI" id="CHEBI:29105"/>
    </ligand>
</feature>
<feature type="binding site" evidence="1">
    <location>
        <position position="43"/>
    </location>
    <ligand>
        <name>Zn(2+)</name>
        <dbReference type="ChEBI" id="CHEBI:29105"/>
    </ligand>
</feature>
<sequence>MAKKSMIAKQKRTPKFKVQAYTRCERCGRPHSVYRKFKLCRICFRELAYKGQIPGVKKASW</sequence>
<organism>
    <name type="scientific">Anoxybacillus flavithermus (strain DSM 21510 / WK1)</name>
    <dbReference type="NCBI Taxonomy" id="491915"/>
    <lineage>
        <taxon>Bacteria</taxon>
        <taxon>Bacillati</taxon>
        <taxon>Bacillota</taxon>
        <taxon>Bacilli</taxon>
        <taxon>Bacillales</taxon>
        <taxon>Anoxybacillaceae</taxon>
        <taxon>Anoxybacillus</taxon>
    </lineage>
</organism>
<keyword id="KW-0479">Metal-binding</keyword>
<keyword id="KW-0687">Ribonucleoprotein</keyword>
<keyword id="KW-0689">Ribosomal protein</keyword>
<keyword id="KW-0694">RNA-binding</keyword>
<keyword id="KW-0699">rRNA-binding</keyword>
<keyword id="KW-0862">Zinc</keyword>
<evidence type="ECO:0000255" key="1">
    <source>
        <dbReference type="HAMAP-Rule" id="MF_01364"/>
    </source>
</evidence>
<evidence type="ECO:0000305" key="2"/>
<protein>
    <recommendedName>
        <fullName evidence="1">Small ribosomal subunit protein uS14</fullName>
    </recommendedName>
    <alternativeName>
        <fullName evidence="2">30S ribosomal protein S14 type Z</fullName>
    </alternativeName>
</protein>
<gene>
    <name evidence="1" type="primary">rpsZ</name>
    <name evidence="1" type="synonym">rpsN</name>
    <name type="ordered locus">Aflv_0118</name>
</gene>